<evidence type="ECO:0000255" key="1">
    <source>
        <dbReference type="HAMAP-Rule" id="MF_00270"/>
    </source>
</evidence>
<evidence type="ECO:0000305" key="2"/>
<evidence type="ECO:0007829" key="3">
    <source>
        <dbReference type="PDB" id="5O5J"/>
    </source>
</evidence>
<evidence type="ECO:0007829" key="4">
    <source>
        <dbReference type="PDB" id="5XYU"/>
    </source>
</evidence>
<sequence>MAKSNKRRPAPEKPVKTRKCVFCSKKGQTIDYKDTALLRTYISERGKIRARRVTGNCVQHQRDIAVAVKNAREVALLPFGSSTR</sequence>
<gene>
    <name evidence="1" type="primary">rpsR2</name>
    <name type="synonym">rpsR1</name>
    <name type="ordered locus">MSMEG_6895</name>
    <name type="ordered locus">MSMEI_6711</name>
</gene>
<organism>
    <name type="scientific">Mycolicibacterium smegmatis (strain ATCC 700084 / mc(2)155)</name>
    <name type="common">Mycobacterium smegmatis</name>
    <dbReference type="NCBI Taxonomy" id="246196"/>
    <lineage>
        <taxon>Bacteria</taxon>
        <taxon>Bacillati</taxon>
        <taxon>Actinomycetota</taxon>
        <taxon>Actinomycetes</taxon>
        <taxon>Mycobacteriales</taxon>
        <taxon>Mycobacteriaceae</taxon>
        <taxon>Mycolicibacterium</taxon>
    </lineage>
</organism>
<comment type="function">
    <text evidence="1">Binds as a heterodimer with protein bS6 to the central domain of the 16S rRNA, where it helps stabilize the platform of the 30S subunit.</text>
</comment>
<comment type="subunit">
    <text evidence="1">Part of the 30S ribosomal subunit. Forms a tight heterodimer with protein bS6.</text>
</comment>
<comment type="similarity">
    <text evidence="1">Belongs to the bacterial ribosomal protein bS18 family.</text>
</comment>
<dbReference type="EMBL" id="CP000480">
    <property type="protein sequence ID" value="ABK72284.1"/>
    <property type="molecule type" value="Genomic_DNA"/>
</dbReference>
<dbReference type="EMBL" id="CP001663">
    <property type="protein sequence ID" value="AFP43137.1"/>
    <property type="molecule type" value="Genomic_DNA"/>
</dbReference>
<dbReference type="RefSeq" id="YP_891095.1">
    <property type="nucleotide sequence ID" value="NC_008596.1"/>
</dbReference>
<dbReference type="PDB" id="5O5J">
    <property type="method" value="EM"/>
    <property type="resolution" value="3.45 A"/>
    <property type="chains" value="R=1-84"/>
</dbReference>
<dbReference type="PDB" id="5O61">
    <property type="method" value="EM"/>
    <property type="resolution" value="3.31 A"/>
    <property type="chains" value="BR=1-84"/>
</dbReference>
<dbReference type="PDB" id="5XYU">
    <property type="method" value="EM"/>
    <property type="resolution" value="3.45 A"/>
    <property type="chains" value="R=1-84"/>
</dbReference>
<dbReference type="PDB" id="5ZEB">
    <property type="method" value="EM"/>
    <property type="resolution" value="3.40 A"/>
    <property type="chains" value="r=1-84"/>
</dbReference>
<dbReference type="PDB" id="5ZEP">
    <property type="method" value="EM"/>
    <property type="resolution" value="3.40 A"/>
    <property type="chains" value="r=1-84"/>
</dbReference>
<dbReference type="PDB" id="5ZEU">
    <property type="method" value="EM"/>
    <property type="resolution" value="3.70 A"/>
    <property type="chains" value="r=1-84"/>
</dbReference>
<dbReference type="PDB" id="8V9J">
    <property type="method" value="EM"/>
    <property type="resolution" value="3.10 A"/>
    <property type="chains" value="r=1-84"/>
</dbReference>
<dbReference type="PDB" id="8V9K">
    <property type="method" value="EM"/>
    <property type="resolution" value="3.10 A"/>
    <property type="chains" value="r=1-84"/>
</dbReference>
<dbReference type="PDB" id="8V9L">
    <property type="method" value="EM"/>
    <property type="resolution" value="3.00 A"/>
    <property type="chains" value="r=1-84"/>
</dbReference>
<dbReference type="PDB" id="8VIO">
    <property type="method" value="EM"/>
    <property type="resolution" value="3.26 A"/>
    <property type="chains" value="r=1-84"/>
</dbReference>
<dbReference type="PDB" id="8WHX">
    <property type="method" value="EM"/>
    <property type="resolution" value="2.80 A"/>
    <property type="chains" value="s=1-84"/>
</dbReference>
<dbReference type="PDB" id="8WI7">
    <property type="method" value="EM"/>
    <property type="resolution" value="3.50 A"/>
    <property type="chains" value="s=1-84"/>
</dbReference>
<dbReference type="PDB" id="8WI9">
    <property type="method" value="EM"/>
    <property type="resolution" value="3.50 A"/>
    <property type="chains" value="s=1-84"/>
</dbReference>
<dbReference type="PDB" id="8WIB">
    <property type="method" value="EM"/>
    <property type="resolution" value="3.50 A"/>
    <property type="chains" value="s=1-84"/>
</dbReference>
<dbReference type="PDB" id="8WID">
    <property type="method" value="EM"/>
    <property type="resolution" value="3.50 A"/>
    <property type="chains" value="s=1-84"/>
</dbReference>
<dbReference type="PDB" id="8WIF">
    <property type="method" value="EM"/>
    <property type="resolution" value="2.90 A"/>
    <property type="chains" value="s=1-84"/>
</dbReference>
<dbReference type="PDBsum" id="5O5J"/>
<dbReference type="PDBsum" id="5O61"/>
<dbReference type="PDBsum" id="5XYU"/>
<dbReference type="PDBsum" id="5ZEB"/>
<dbReference type="PDBsum" id="5ZEP"/>
<dbReference type="PDBsum" id="5ZEU"/>
<dbReference type="PDBsum" id="8V9J"/>
<dbReference type="PDBsum" id="8V9K"/>
<dbReference type="PDBsum" id="8V9L"/>
<dbReference type="PDBsum" id="8VIO"/>
<dbReference type="PDBsum" id="8WHX"/>
<dbReference type="PDBsum" id="8WI7"/>
<dbReference type="PDBsum" id="8WI9"/>
<dbReference type="PDBsum" id="8WIB"/>
<dbReference type="PDBsum" id="8WID"/>
<dbReference type="PDBsum" id="8WIF"/>
<dbReference type="EMDB" id="EMD-3748"/>
<dbReference type="EMDB" id="EMD-3751"/>
<dbReference type="EMDB" id="EMD-37551"/>
<dbReference type="EMDB" id="EMD-37559"/>
<dbReference type="EMDB" id="EMD-37561"/>
<dbReference type="EMDB" id="EMD-37562"/>
<dbReference type="EMDB" id="EMD-37564"/>
<dbReference type="EMDB" id="EMD-37565"/>
<dbReference type="EMDB" id="EMD-43074"/>
<dbReference type="EMDB" id="EMD-43075"/>
<dbReference type="EMDB" id="EMD-43076"/>
<dbReference type="EMDB" id="EMD-43267"/>
<dbReference type="EMDB" id="EMD-6790"/>
<dbReference type="EMDB" id="EMD-6920"/>
<dbReference type="EMDB" id="EMD-6921"/>
<dbReference type="EMDB" id="EMD-6923"/>
<dbReference type="SMR" id="A0R7F7"/>
<dbReference type="IntAct" id="A0R7F7">
    <property type="interactions" value="1"/>
</dbReference>
<dbReference type="STRING" id="246196.MSMEG_6895"/>
<dbReference type="PaxDb" id="246196-MSMEI_6711"/>
<dbReference type="KEGG" id="msb:LJ00_34070"/>
<dbReference type="KEGG" id="msg:MSMEI_6711"/>
<dbReference type="KEGG" id="msm:MSMEG_6895"/>
<dbReference type="PATRIC" id="fig|246196.19.peg.6716"/>
<dbReference type="eggNOG" id="COG0238">
    <property type="taxonomic scope" value="Bacteria"/>
</dbReference>
<dbReference type="OrthoDB" id="9812008at2"/>
<dbReference type="Proteomes" id="UP000000757">
    <property type="component" value="Chromosome"/>
</dbReference>
<dbReference type="Proteomes" id="UP000006158">
    <property type="component" value="Chromosome"/>
</dbReference>
<dbReference type="GO" id="GO:0022627">
    <property type="term" value="C:cytosolic small ribosomal subunit"/>
    <property type="evidence" value="ECO:0007669"/>
    <property type="project" value="TreeGrafter"/>
</dbReference>
<dbReference type="GO" id="GO:0070181">
    <property type="term" value="F:small ribosomal subunit rRNA binding"/>
    <property type="evidence" value="ECO:0007669"/>
    <property type="project" value="TreeGrafter"/>
</dbReference>
<dbReference type="GO" id="GO:0003735">
    <property type="term" value="F:structural constituent of ribosome"/>
    <property type="evidence" value="ECO:0007669"/>
    <property type="project" value="InterPro"/>
</dbReference>
<dbReference type="GO" id="GO:0006412">
    <property type="term" value="P:translation"/>
    <property type="evidence" value="ECO:0007669"/>
    <property type="project" value="UniProtKB-UniRule"/>
</dbReference>
<dbReference type="FunFam" id="4.10.640.10:FF:000004">
    <property type="entry name" value="30S ribosomal protein S18"/>
    <property type="match status" value="1"/>
</dbReference>
<dbReference type="Gene3D" id="4.10.640.10">
    <property type="entry name" value="Ribosomal protein S18"/>
    <property type="match status" value="1"/>
</dbReference>
<dbReference type="HAMAP" id="MF_00270">
    <property type="entry name" value="Ribosomal_bS18"/>
    <property type="match status" value="1"/>
</dbReference>
<dbReference type="InterPro" id="IPR001648">
    <property type="entry name" value="Ribosomal_bS18"/>
</dbReference>
<dbReference type="InterPro" id="IPR018275">
    <property type="entry name" value="Ribosomal_bS18_CS"/>
</dbReference>
<dbReference type="InterPro" id="IPR036870">
    <property type="entry name" value="Ribosomal_bS18_sf"/>
</dbReference>
<dbReference type="NCBIfam" id="TIGR00165">
    <property type="entry name" value="S18"/>
    <property type="match status" value="1"/>
</dbReference>
<dbReference type="PANTHER" id="PTHR13479">
    <property type="entry name" value="30S RIBOSOMAL PROTEIN S18"/>
    <property type="match status" value="1"/>
</dbReference>
<dbReference type="PANTHER" id="PTHR13479:SF62">
    <property type="entry name" value="SMALL RIBOSOMAL SUBUNIT PROTEIN BS18A"/>
    <property type="match status" value="1"/>
</dbReference>
<dbReference type="Pfam" id="PF01084">
    <property type="entry name" value="Ribosomal_S18"/>
    <property type="match status" value="1"/>
</dbReference>
<dbReference type="PRINTS" id="PR00974">
    <property type="entry name" value="RIBOSOMALS18"/>
</dbReference>
<dbReference type="SUPFAM" id="SSF46911">
    <property type="entry name" value="Ribosomal protein S18"/>
    <property type="match status" value="1"/>
</dbReference>
<dbReference type="PROSITE" id="PS00057">
    <property type="entry name" value="RIBOSOMAL_S18"/>
    <property type="match status" value="1"/>
</dbReference>
<keyword id="KW-0002">3D-structure</keyword>
<keyword id="KW-1185">Reference proteome</keyword>
<keyword id="KW-0687">Ribonucleoprotein</keyword>
<keyword id="KW-0689">Ribosomal protein</keyword>
<keyword id="KW-0694">RNA-binding</keyword>
<keyword id="KW-0699">rRNA-binding</keyword>
<name>RS182_MYCS2</name>
<protein>
    <recommendedName>
        <fullName evidence="1">Small ribosomal subunit protein bS18B</fullName>
    </recommendedName>
    <alternativeName>
        <fullName evidence="2">30S ribosomal protein S18 2</fullName>
    </alternativeName>
</protein>
<reference key="1">
    <citation type="submission" date="2006-10" db="EMBL/GenBank/DDBJ databases">
        <authorList>
            <person name="Fleischmann R.D."/>
            <person name="Dodson R.J."/>
            <person name="Haft D.H."/>
            <person name="Merkel J.S."/>
            <person name="Nelson W.C."/>
            <person name="Fraser C.M."/>
        </authorList>
    </citation>
    <scope>NUCLEOTIDE SEQUENCE [LARGE SCALE GENOMIC DNA]</scope>
    <source>
        <strain>ATCC 700084 / mc(2)155</strain>
    </source>
</reference>
<reference key="2">
    <citation type="journal article" date="2007" name="Genome Biol.">
        <title>Interrupted coding sequences in Mycobacterium smegmatis: authentic mutations or sequencing errors?</title>
        <authorList>
            <person name="Deshayes C."/>
            <person name="Perrodou E."/>
            <person name="Gallien S."/>
            <person name="Euphrasie D."/>
            <person name="Schaeffer C."/>
            <person name="Van-Dorsselaer A."/>
            <person name="Poch O."/>
            <person name="Lecompte O."/>
            <person name="Reyrat J.-M."/>
        </authorList>
    </citation>
    <scope>NUCLEOTIDE SEQUENCE [LARGE SCALE GENOMIC DNA]</scope>
    <source>
        <strain>ATCC 700084 / mc(2)155</strain>
    </source>
</reference>
<reference key="3">
    <citation type="journal article" date="2009" name="Genome Res.">
        <title>Ortho-proteogenomics: multiple proteomes investigation through orthology and a new MS-based protocol.</title>
        <authorList>
            <person name="Gallien S."/>
            <person name="Perrodou E."/>
            <person name="Carapito C."/>
            <person name="Deshayes C."/>
            <person name="Reyrat J.-M."/>
            <person name="Van Dorsselaer A."/>
            <person name="Poch O."/>
            <person name="Schaeffer C."/>
            <person name="Lecompte O."/>
        </authorList>
    </citation>
    <scope>NUCLEOTIDE SEQUENCE [LARGE SCALE GENOMIC DNA]</scope>
    <source>
        <strain>ATCC 700084 / mc(2)155</strain>
    </source>
</reference>
<proteinExistence type="evidence at protein level"/>
<accession>A0R7F7</accession>
<accession>I7GBX1</accession>
<feature type="chain" id="PRO_0000345504" description="Small ribosomal subunit protein bS18B">
    <location>
        <begin position="1"/>
        <end position="84"/>
    </location>
</feature>
<feature type="strand" evidence="3">
    <location>
        <begin position="24"/>
        <end position="26"/>
    </location>
</feature>
<feature type="helix" evidence="4">
    <location>
        <begin position="35"/>
        <end position="41"/>
    </location>
</feature>
<feature type="helix" evidence="4">
    <location>
        <begin position="51"/>
        <end position="54"/>
    </location>
</feature>
<feature type="helix" evidence="4">
    <location>
        <begin position="58"/>
        <end position="74"/>
    </location>
</feature>